<protein>
    <recommendedName>
        <fullName evidence="1">Pantothenate synthetase</fullName>
        <shortName evidence="1">PS</shortName>
        <ecNumber evidence="1">6.3.2.1</ecNumber>
    </recommendedName>
    <alternativeName>
        <fullName evidence="1">Pantoate--beta-alanine ligase</fullName>
    </alternativeName>
    <alternativeName>
        <fullName evidence="1">Pantoate-activating enzyme</fullName>
    </alternativeName>
</protein>
<accession>Q0BMQ6</accession>
<comment type="function">
    <text evidence="1">Catalyzes the condensation of pantoate with beta-alanine in an ATP-dependent reaction via a pantoyl-adenylate intermediate.</text>
</comment>
<comment type="catalytic activity">
    <reaction evidence="1">
        <text>(R)-pantoate + beta-alanine + ATP = (R)-pantothenate + AMP + diphosphate + H(+)</text>
        <dbReference type="Rhea" id="RHEA:10912"/>
        <dbReference type="ChEBI" id="CHEBI:15378"/>
        <dbReference type="ChEBI" id="CHEBI:15980"/>
        <dbReference type="ChEBI" id="CHEBI:29032"/>
        <dbReference type="ChEBI" id="CHEBI:30616"/>
        <dbReference type="ChEBI" id="CHEBI:33019"/>
        <dbReference type="ChEBI" id="CHEBI:57966"/>
        <dbReference type="ChEBI" id="CHEBI:456215"/>
        <dbReference type="EC" id="6.3.2.1"/>
    </reaction>
</comment>
<comment type="pathway">
    <text evidence="1">Cofactor biosynthesis; (R)-pantothenate biosynthesis; (R)-pantothenate from (R)-pantoate and beta-alanine: step 1/1.</text>
</comment>
<comment type="subunit">
    <text evidence="1">Homodimer.</text>
</comment>
<comment type="subcellular location">
    <subcellularLocation>
        <location evidence="1">Cytoplasm</location>
    </subcellularLocation>
</comment>
<comment type="miscellaneous">
    <text evidence="1">The reaction proceeds by a bi uni uni bi ping pong mechanism.</text>
</comment>
<comment type="similarity">
    <text evidence="1">Belongs to the pantothenate synthetase family.</text>
</comment>
<comment type="sequence caution" evidence="2">
    <conflict type="erroneous initiation">
        <sequence resource="EMBL-CDS" id="ABI82628"/>
    </conflict>
</comment>
<evidence type="ECO:0000255" key="1">
    <source>
        <dbReference type="HAMAP-Rule" id="MF_00158"/>
    </source>
</evidence>
<evidence type="ECO:0000305" key="2"/>
<organism>
    <name type="scientific">Francisella tularensis subsp. holarctica (strain OSU18)</name>
    <dbReference type="NCBI Taxonomy" id="393011"/>
    <lineage>
        <taxon>Bacteria</taxon>
        <taxon>Pseudomonadati</taxon>
        <taxon>Pseudomonadota</taxon>
        <taxon>Gammaproteobacteria</taxon>
        <taxon>Thiotrichales</taxon>
        <taxon>Francisellaceae</taxon>
        <taxon>Francisella</taxon>
    </lineage>
</organism>
<keyword id="KW-0067">ATP-binding</keyword>
<keyword id="KW-0963">Cytoplasm</keyword>
<keyword id="KW-0436">Ligase</keyword>
<keyword id="KW-0547">Nucleotide-binding</keyword>
<keyword id="KW-0566">Pantothenate biosynthesis</keyword>
<gene>
    <name evidence="1" type="primary">panC</name>
    <name type="ordered locus">FTH_0676</name>
</gene>
<sequence length="261" mass="29685">MIIADNIKQFHSIRNSLIKQQKIGFVPTMGALHNGHISLIKKAKSENDVVIVSIFVNPTQFNNPNDYQTYPNQLQQDIQILASLDVDVLFNPSEKDIYPDGNLLRIEPKLEIANILEGKSRPGHFSGTLTVVLKLLQITKPNNLYLGEKDYQQVMLIKQLVKDFFINTKIIVCPTQRQPSGLPLSSRNKNLTSTDIEIANKIYEILRQDDFSNLEELTNKINSTGAKLQYIQKLNNRIFLAFYIGKVRLIDNFLKETGPSC</sequence>
<proteinExistence type="inferred from homology"/>
<dbReference type="EC" id="6.3.2.1" evidence="1"/>
<dbReference type="EMBL" id="CP000437">
    <property type="protein sequence ID" value="ABI82628.1"/>
    <property type="status" value="ALT_INIT"/>
    <property type="molecule type" value="Genomic_DNA"/>
</dbReference>
<dbReference type="RefSeq" id="WP_003018203.1">
    <property type="nucleotide sequence ID" value="NC_017463.1"/>
</dbReference>
<dbReference type="SMR" id="Q0BMQ6"/>
<dbReference type="KEGG" id="fth:FTH_0676"/>
<dbReference type="UniPathway" id="UPA00028">
    <property type="reaction ID" value="UER00005"/>
</dbReference>
<dbReference type="GO" id="GO:0005829">
    <property type="term" value="C:cytosol"/>
    <property type="evidence" value="ECO:0007669"/>
    <property type="project" value="TreeGrafter"/>
</dbReference>
<dbReference type="GO" id="GO:0005524">
    <property type="term" value="F:ATP binding"/>
    <property type="evidence" value="ECO:0007669"/>
    <property type="project" value="UniProtKB-KW"/>
</dbReference>
<dbReference type="GO" id="GO:0004592">
    <property type="term" value="F:pantoate-beta-alanine ligase activity"/>
    <property type="evidence" value="ECO:0007669"/>
    <property type="project" value="UniProtKB-UniRule"/>
</dbReference>
<dbReference type="GO" id="GO:0015940">
    <property type="term" value="P:pantothenate biosynthetic process"/>
    <property type="evidence" value="ECO:0007669"/>
    <property type="project" value="UniProtKB-UniRule"/>
</dbReference>
<dbReference type="Gene3D" id="3.40.50.620">
    <property type="entry name" value="HUPs"/>
    <property type="match status" value="1"/>
</dbReference>
<dbReference type="Gene3D" id="3.30.1300.10">
    <property type="entry name" value="Pantoate-beta-alanine ligase, C-terminal domain"/>
    <property type="match status" value="1"/>
</dbReference>
<dbReference type="HAMAP" id="MF_00158">
    <property type="entry name" value="PanC"/>
    <property type="match status" value="1"/>
</dbReference>
<dbReference type="InterPro" id="IPR004821">
    <property type="entry name" value="Cyt_trans-like"/>
</dbReference>
<dbReference type="InterPro" id="IPR003721">
    <property type="entry name" value="Pantoate_ligase"/>
</dbReference>
<dbReference type="InterPro" id="IPR042176">
    <property type="entry name" value="Pantoate_ligase_C"/>
</dbReference>
<dbReference type="InterPro" id="IPR014729">
    <property type="entry name" value="Rossmann-like_a/b/a_fold"/>
</dbReference>
<dbReference type="NCBIfam" id="TIGR00125">
    <property type="entry name" value="cyt_tran_rel"/>
    <property type="match status" value="1"/>
</dbReference>
<dbReference type="NCBIfam" id="TIGR00018">
    <property type="entry name" value="panC"/>
    <property type="match status" value="1"/>
</dbReference>
<dbReference type="PANTHER" id="PTHR21299">
    <property type="entry name" value="CYTIDYLATE KINASE/PANTOATE-BETA-ALANINE LIGASE"/>
    <property type="match status" value="1"/>
</dbReference>
<dbReference type="PANTHER" id="PTHR21299:SF1">
    <property type="entry name" value="PANTOATE--BETA-ALANINE LIGASE"/>
    <property type="match status" value="1"/>
</dbReference>
<dbReference type="Pfam" id="PF02569">
    <property type="entry name" value="Pantoate_ligase"/>
    <property type="match status" value="1"/>
</dbReference>
<dbReference type="SUPFAM" id="SSF52374">
    <property type="entry name" value="Nucleotidylyl transferase"/>
    <property type="match status" value="1"/>
</dbReference>
<reference key="1">
    <citation type="journal article" date="2006" name="J. Bacteriol.">
        <title>Chromosome rearrangement and diversification of Francisella tularensis revealed by the type B (OSU18) genome sequence.</title>
        <authorList>
            <person name="Petrosino J.F."/>
            <person name="Xiang Q."/>
            <person name="Karpathy S.E."/>
            <person name="Jiang H."/>
            <person name="Yerrapragada S."/>
            <person name="Liu Y."/>
            <person name="Gioia J."/>
            <person name="Hemphill L."/>
            <person name="Gonzalez A."/>
            <person name="Raghavan T.M."/>
            <person name="Uzman A."/>
            <person name="Fox G.E."/>
            <person name="Highlander S."/>
            <person name="Reichard M."/>
            <person name="Morton R.J."/>
            <person name="Clinkenbeard K.D."/>
            <person name="Weinstock G.M."/>
        </authorList>
    </citation>
    <scope>NUCLEOTIDE SEQUENCE [LARGE SCALE GENOMIC DNA]</scope>
    <source>
        <strain>OSU18</strain>
    </source>
</reference>
<name>PANC_FRATO</name>
<feature type="chain" id="PRO_0000305448" description="Pantothenate synthetase">
    <location>
        <begin position="1"/>
        <end position="261"/>
    </location>
</feature>
<feature type="active site" description="Proton donor" evidence="1">
    <location>
        <position position="36"/>
    </location>
</feature>
<feature type="binding site" evidence="1">
    <location>
        <begin position="29"/>
        <end position="36"/>
    </location>
    <ligand>
        <name>ATP</name>
        <dbReference type="ChEBI" id="CHEBI:30616"/>
    </ligand>
</feature>
<feature type="binding site" evidence="1">
    <location>
        <position position="60"/>
    </location>
    <ligand>
        <name>(R)-pantoate</name>
        <dbReference type="ChEBI" id="CHEBI:15980"/>
    </ligand>
</feature>
<feature type="binding site" evidence="1">
    <location>
        <position position="60"/>
    </location>
    <ligand>
        <name>beta-alanine</name>
        <dbReference type="ChEBI" id="CHEBI:57966"/>
    </ligand>
</feature>
<feature type="binding site" evidence="1">
    <location>
        <begin position="147"/>
        <end position="150"/>
    </location>
    <ligand>
        <name>ATP</name>
        <dbReference type="ChEBI" id="CHEBI:30616"/>
    </ligand>
</feature>
<feature type="binding site" evidence="1">
    <location>
        <position position="153"/>
    </location>
    <ligand>
        <name>(R)-pantoate</name>
        <dbReference type="ChEBI" id="CHEBI:15980"/>
    </ligand>
</feature>
<feature type="binding site" evidence="1">
    <location>
        <begin position="184"/>
        <end position="187"/>
    </location>
    <ligand>
        <name>ATP</name>
        <dbReference type="ChEBI" id="CHEBI:30616"/>
    </ligand>
</feature>